<gene>
    <name type="primary">SLC26A2</name>
    <name type="synonym">DTD</name>
    <name type="synonym">DTDST</name>
</gene>
<reference key="1">
    <citation type="journal article" date="1994" name="Cell">
        <title>The diastrophic dysplasia gene encodes a novel sulfate transporter: positional cloning by fine-structure linkage disequilibrium mapping.</title>
        <authorList>
            <person name="Haestbacka J."/>
            <person name="de la Chapelle A."/>
            <person name="Mahtani M.M."/>
            <person name="Clines G."/>
            <person name="Reeve-Daly M.P."/>
            <person name="Daly M."/>
            <person name="Hamilton B.A."/>
            <person name="Kusumi K."/>
            <person name="Trivedi B."/>
            <person name="Weaver A."/>
            <person name="Coloma A."/>
            <person name="Lovett M."/>
            <person name="Buckler A."/>
            <person name="Kaitila I."/>
            <person name="Lander E.S."/>
        </authorList>
    </citation>
    <scope>NUCLEOTIDE SEQUENCE [MRNA]</scope>
    <scope>VARIANT THR-574</scope>
    <scope>FUNCTION</scope>
    <scope>SUBCELLULAR LOCATION</scope>
    <scope>TISSUE SPECIFICITY</scope>
    <source>
        <tissue>Brain</tissue>
    </source>
</reference>
<reference key="2">
    <citation type="journal article" date="2004" name="Nat. Genet.">
        <title>Complete sequencing and characterization of 21,243 full-length human cDNAs.</title>
        <authorList>
            <person name="Ota T."/>
            <person name="Suzuki Y."/>
            <person name="Nishikawa T."/>
            <person name="Otsuki T."/>
            <person name="Sugiyama T."/>
            <person name="Irie R."/>
            <person name="Wakamatsu A."/>
            <person name="Hayashi K."/>
            <person name="Sato H."/>
            <person name="Nagai K."/>
            <person name="Kimura K."/>
            <person name="Makita H."/>
            <person name="Sekine M."/>
            <person name="Obayashi M."/>
            <person name="Nishi T."/>
            <person name="Shibahara T."/>
            <person name="Tanaka T."/>
            <person name="Ishii S."/>
            <person name="Yamamoto J."/>
            <person name="Saito K."/>
            <person name="Kawai Y."/>
            <person name="Isono Y."/>
            <person name="Nakamura Y."/>
            <person name="Nagahari K."/>
            <person name="Murakami K."/>
            <person name="Yasuda T."/>
            <person name="Iwayanagi T."/>
            <person name="Wagatsuma M."/>
            <person name="Shiratori A."/>
            <person name="Sudo H."/>
            <person name="Hosoiri T."/>
            <person name="Kaku Y."/>
            <person name="Kodaira H."/>
            <person name="Kondo H."/>
            <person name="Sugawara M."/>
            <person name="Takahashi M."/>
            <person name="Kanda K."/>
            <person name="Yokoi T."/>
            <person name="Furuya T."/>
            <person name="Kikkawa E."/>
            <person name="Omura Y."/>
            <person name="Abe K."/>
            <person name="Kamihara K."/>
            <person name="Katsuta N."/>
            <person name="Sato K."/>
            <person name="Tanikawa M."/>
            <person name="Yamazaki M."/>
            <person name="Ninomiya K."/>
            <person name="Ishibashi T."/>
            <person name="Yamashita H."/>
            <person name="Murakawa K."/>
            <person name="Fujimori K."/>
            <person name="Tanai H."/>
            <person name="Kimata M."/>
            <person name="Watanabe M."/>
            <person name="Hiraoka S."/>
            <person name="Chiba Y."/>
            <person name="Ishida S."/>
            <person name="Ono Y."/>
            <person name="Takiguchi S."/>
            <person name="Watanabe S."/>
            <person name="Yosida M."/>
            <person name="Hotuta T."/>
            <person name="Kusano J."/>
            <person name="Kanehori K."/>
            <person name="Takahashi-Fujii A."/>
            <person name="Hara H."/>
            <person name="Tanase T.-O."/>
            <person name="Nomura Y."/>
            <person name="Togiya S."/>
            <person name="Komai F."/>
            <person name="Hara R."/>
            <person name="Takeuchi K."/>
            <person name="Arita M."/>
            <person name="Imose N."/>
            <person name="Musashino K."/>
            <person name="Yuuki H."/>
            <person name="Oshima A."/>
            <person name="Sasaki N."/>
            <person name="Aotsuka S."/>
            <person name="Yoshikawa Y."/>
            <person name="Matsunawa H."/>
            <person name="Ichihara T."/>
            <person name="Shiohata N."/>
            <person name="Sano S."/>
            <person name="Moriya S."/>
            <person name="Momiyama H."/>
            <person name="Satoh N."/>
            <person name="Takami S."/>
            <person name="Terashima Y."/>
            <person name="Suzuki O."/>
            <person name="Nakagawa S."/>
            <person name="Senoh A."/>
            <person name="Mizoguchi H."/>
            <person name="Goto Y."/>
            <person name="Shimizu F."/>
            <person name="Wakebe H."/>
            <person name="Hishigaki H."/>
            <person name="Watanabe T."/>
            <person name="Sugiyama A."/>
            <person name="Takemoto M."/>
            <person name="Kawakami B."/>
            <person name="Yamazaki M."/>
            <person name="Watanabe K."/>
            <person name="Kumagai A."/>
            <person name="Itakura S."/>
            <person name="Fukuzumi Y."/>
            <person name="Fujimori Y."/>
            <person name="Komiyama M."/>
            <person name="Tashiro H."/>
            <person name="Tanigami A."/>
            <person name="Fujiwara T."/>
            <person name="Ono T."/>
            <person name="Yamada K."/>
            <person name="Fujii Y."/>
            <person name="Ozaki K."/>
            <person name="Hirao M."/>
            <person name="Ohmori Y."/>
            <person name="Kawabata A."/>
            <person name="Hikiji T."/>
            <person name="Kobatake N."/>
            <person name="Inagaki H."/>
            <person name="Ikema Y."/>
            <person name="Okamoto S."/>
            <person name="Okitani R."/>
            <person name="Kawakami T."/>
            <person name="Noguchi S."/>
            <person name="Itoh T."/>
            <person name="Shigeta K."/>
            <person name="Senba T."/>
            <person name="Matsumura K."/>
            <person name="Nakajima Y."/>
            <person name="Mizuno T."/>
            <person name="Morinaga M."/>
            <person name="Sasaki M."/>
            <person name="Togashi T."/>
            <person name="Oyama M."/>
            <person name="Hata H."/>
            <person name="Watanabe M."/>
            <person name="Komatsu T."/>
            <person name="Mizushima-Sugano J."/>
            <person name="Satoh T."/>
            <person name="Shirai Y."/>
            <person name="Takahashi Y."/>
            <person name="Nakagawa K."/>
            <person name="Okumura K."/>
            <person name="Nagase T."/>
            <person name="Nomura N."/>
            <person name="Kikuchi H."/>
            <person name="Masuho Y."/>
            <person name="Yamashita R."/>
            <person name="Nakai K."/>
            <person name="Yada T."/>
            <person name="Nakamura Y."/>
            <person name="Ohara O."/>
            <person name="Isogai T."/>
            <person name="Sugano S."/>
        </authorList>
    </citation>
    <scope>NUCLEOTIDE SEQUENCE [LARGE SCALE MRNA]</scope>
    <scope>VARIANT THR-574</scope>
    <source>
        <tissue>Tongue</tissue>
    </source>
</reference>
<reference key="3">
    <citation type="journal article" date="2004" name="Nature">
        <title>The DNA sequence and comparative analysis of human chromosome 5.</title>
        <authorList>
            <person name="Schmutz J."/>
            <person name="Martin J."/>
            <person name="Terry A."/>
            <person name="Couronne O."/>
            <person name="Grimwood J."/>
            <person name="Lowry S."/>
            <person name="Gordon L.A."/>
            <person name="Scott D."/>
            <person name="Xie G."/>
            <person name="Huang W."/>
            <person name="Hellsten U."/>
            <person name="Tran-Gyamfi M."/>
            <person name="She X."/>
            <person name="Prabhakar S."/>
            <person name="Aerts A."/>
            <person name="Altherr M."/>
            <person name="Bajorek E."/>
            <person name="Black S."/>
            <person name="Branscomb E."/>
            <person name="Caoile C."/>
            <person name="Challacombe J.F."/>
            <person name="Chan Y.M."/>
            <person name="Denys M."/>
            <person name="Detter J.C."/>
            <person name="Escobar J."/>
            <person name="Flowers D."/>
            <person name="Fotopulos D."/>
            <person name="Glavina T."/>
            <person name="Gomez M."/>
            <person name="Gonzales E."/>
            <person name="Goodstein D."/>
            <person name="Grigoriev I."/>
            <person name="Groza M."/>
            <person name="Hammon N."/>
            <person name="Hawkins T."/>
            <person name="Haydu L."/>
            <person name="Israni S."/>
            <person name="Jett J."/>
            <person name="Kadner K."/>
            <person name="Kimball H."/>
            <person name="Kobayashi A."/>
            <person name="Lopez F."/>
            <person name="Lou Y."/>
            <person name="Martinez D."/>
            <person name="Medina C."/>
            <person name="Morgan J."/>
            <person name="Nandkeshwar R."/>
            <person name="Noonan J.P."/>
            <person name="Pitluck S."/>
            <person name="Pollard M."/>
            <person name="Predki P."/>
            <person name="Priest J."/>
            <person name="Ramirez L."/>
            <person name="Retterer J."/>
            <person name="Rodriguez A."/>
            <person name="Rogers S."/>
            <person name="Salamov A."/>
            <person name="Salazar A."/>
            <person name="Thayer N."/>
            <person name="Tice H."/>
            <person name="Tsai M."/>
            <person name="Ustaszewska A."/>
            <person name="Vo N."/>
            <person name="Wheeler J."/>
            <person name="Wu K."/>
            <person name="Yang J."/>
            <person name="Dickson M."/>
            <person name="Cheng J.-F."/>
            <person name="Eichler E.E."/>
            <person name="Olsen A."/>
            <person name="Pennacchio L.A."/>
            <person name="Rokhsar D.S."/>
            <person name="Richardson P."/>
            <person name="Lucas S.M."/>
            <person name="Myers R.M."/>
            <person name="Rubin E.M."/>
        </authorList>
    </citation>
    <scope>NUCLEOTIDE SEQUENCE [LARGE SCALE GENOMIC DNA]</scope>
</reference>
<reference key="4">
    <citation type="submission" date="2005-09" db="EMBL/GenBank/DDBJ databases">
        <authorList>
            <person name="Mural R.J."/>
            <person name="Istrail S."/>
            <person name="Sutton G.G."/>
            <person name="Florea L."/>
            <person name="Halpern A.L."/>
            <person name="Mobarry C.M."/>
            <person name="Lippert R."/>
            <person name="Walenz B."/>
            <person name="Shatkay H."/>
            <person name="Dew I."/>
            <person name="Miller J.R."/>
            <person name="Flanigan M.J."/>
            <person name="Edwards N.J."/>
            <person name="Bolanos R."/>
            <person name="Fasulo D."/>
            <person name="Halldorsson B.V."/>
            <person name="Hannenhalli S."/>
            <person name="Turner R."/>
            <person name="Yooseph S."/>
            <person name="Lu F."/>
            <person name="Nusskern D.R."/>
            <person name="Shue B.C."/>
            <person name="Zheng X.H."/>
            <person name="Zhong F."/>
            <person name="Delcher A.L."/>
            <person name="Huson D.H."/>
            <person name="Kravitz S.A."/>
            <person name="Mouchard L."/>
            <person name="Reinert K."/>
            <person name="Remington K.A."/>
            <person name="Clark A.G."/>
            <person name="Waterman M.S."/>
            <person name="Eichler E.E."/>
            <person name="Adams M.D."/>
            <person name="Hunkapiller M.W."/>
            <person name="Myers E.W."/>
            <person name="Venter J.C."/>
        </authorList>
    </citation>
    <scope>NUCLEOTIDE SEQUENCE [LARGE SCALE GENOMIC DNA]</scope>
</reference>
<reference key="5">
    <citation type="journal article" date="2004" name="Genome Res.">
        <title>The status, quality, and expansion of the NIH full-length cDNA project: the Mammalian Gene Collection (MGC).</title>
        <authorList>
            <consortium name="The MGC Project Team"/>
        </authorList>
    </citation>
    <scope>NUCLEOTIDE SEQUENCE [LARGE SCALE MRNA]</scope>
    <scope>VARIANT THR-574</scope>
    <source>
        <tissue>Placenta</tissue>
    </source>
</reference>
<reference key="6">
    <citation type="journal article" date="2007" name="BMC Genomics">
        <title>The full-ORF clone resource of the German cDNA consortium.</title>
        <authorList>
            <person name="Bechtel S."/>
            <person name="Rosenfelder H."/>
            <person name="Duda A."/>
            <person name="Schmidt C.P."/>
            <person name="Ernst U."/>
            <person name="Wellenreuther R."/>
            <person name="Mehrle A."/>
            <person name="Schuster C."/>
            <person name="Bahr A."/>
            <person name="Bloecker H."/>
            <person name="Heubner D."/>
            <person name="Hoerlein A."/>
            <person name="Michel G."/>
            <person name="Wedler H."/>
            <person name="Koehrer K."/>
            <person name="Ottenwaelder B."/>
            <person name="Poustka A."/>
            <person name="Wiemann S."/>
            <person name="Schupp I."/>
        </authorList>
    </citation>
    <scope>NUCLEOTIDE SEQUENCE [LARGE SCALE MRNA] OF 614-739</scope>
    <source>
        <tissue>Prostate</tissue>
    </source>
</reference>
<reference key="7">
    <citation type="journal article" date="2008" name="Proc. Natl. Acad. Sci. U.S.A.">
        <title>A quantitative atlas of mitotic phosphorylation.</title>
        <authorList>
            <person name="Dephoure N."/>
            <person name="Zhou C."/>
            <person name="Villen J."/>
            <person name="Beausoleil S.A."/>
            <person name="Bakalarski C.E."/>
            <person name="Elledge S.J."/>
            <person name="Gygi S.P."/>
        </authorList>
    </citation>
    <scope>PHOSPHORYLATION [LARGE SCALE ANALYSIS] AT SER-12 AND SER-16</scope>
    <scope>IDENTIFICATION BY MASS SPECTROMETRY [LARGE SCALE ANALYSIS]</scope>
    <source>
        <tissue>Cervix carcinoma</tissue>
    </source>
</reference>
<reference key="8">
    <citation type="journal article" date="1996" name="Nat. Genet.">
        <title>Achondrogenesis type IB is caused by mutations in the diastrophic dysplasia sulphate transporter gene.</title>
        <authorList>
            <person name="Superti-Furga A."/>
            <person name="Haestbacka J."/>
            <person name="Wilcox W.R."/>
            <person name="Cohn D.H."/>
            <person name="van der Harten H.J."/>
            <person name="Rossi A."/>
            <person name="Blau N."/>
            <person name="Rimoin D.L."/>
            <person name="Steinmann B."/>
            <person name="Lander E.S."/>
            <person name="Gitzelmann R."/>
        </authorList>
    </citation>
    <scope>VARIANTS ACG1B VAL-340 DEL; ASP-425 AND VAL-678</scope>
</reference>
<reference key="9">
    <citation type="journal article" date="1996" name="Am. J. Hum. Genet.">
        <title>Atelosteogenesis type II is caused by mutations in the diastrophic dysplasia sulfate-transporter gene (DTDST): evidence for a phenotypic series involving three chondrodysplasias.</title>
        <authorList>
            <person name="Haestbacka J."/>
            <person name="Superti-Furga A."/>
            <person name="Wilcox W.R."/>
            <person name="Rimoin D.L."/>
            <person name="Cohn D.H."/>
            <person name="Lander E.S."/>
        </authorList>
    </citation>
    <scope>VARIANTS AO2 GLU-255; TRP-279 AND VAL-715</scope>
</reference>
<reference key="10">
    <citation type="journal article" date="1999" name="Clin. Genet.">
        <title>Homozygosity for a novel DTDST mutation in a child with a 'broad bone-platyspondylic' variant of diastrophic dysplasia.</title>
        <authorList>
            <person name="Megarbane A."/>
            <person name="Haddad F.A."/>
            <person name="Haddad-Zebouni S."/>
            <person name="Achram M."/>
            <person name="Eich G."/>
            <person name="Le Merrer M."/>
            <person name="Superti-Furga A."/>
        </authorList>
    </citation>
    <scope>VARIANT DIATROPHIC DYSPLASIA PRO-454</scope>
</reference>
<reference key="11">
    <citation type="journal article" date="2003" name="Am. J. Med. Genet. A">
        <title>Autosomal recessive multiple epiphyseal dysplasia with homozygosity for C653S in the DTDST gene: double-layer patella as a reliable sign.</title>
        <authorList>
            <person name="Maekitie O."/>
            <person name="Savarirayan R."/>
            <person name="Bonafe L."/>
            <person name="Robertson S."/>
            <person name="Susic M."/>
            <person name="Superti-Furga A."/>
            <person name="Cole W.G."/>
        </authorList>
    </citation>
    <scope>VARIANT EDM4 SER-653</scope>
</reference>
<reference key="12">
    <citation type="journal article" date="2001" name="Hum. Mol. Genet.">
        <title>Mutations in the diastrophic dysplasia sulfate transporter (DTDST) gene: correlation between sulfate transport activity and chondrodysplasia phenotype.</title>
        <authorList>
            <person name="Karniski L.P."/>
        </authorList>
    </citation>
    <scope>CHARACTERIZATION OF VARIANTS ACG1B VAL-340 DEL; ASP-425 AND VAL-678</scope>
    <scope>CHARACTERIZATION OF VARIANTS AO2 GLU-255; TRP-279 AND VAL-715</scope>
    <scope>CHARACTERIZATION OF VARIANT DIATROPHIC DYSPLASIA PRO-454</scope>
    <scope>CHARACTERIZATION OF VARIANT EDM4 SER-653</scope>
    <scope>FUNCTION</scope>
</reference>
<reference key="13">
    <citation type="journal article" date="2004" name="Hum. Mol. Genet.">
        <title>Functional expression and cellular distribution of diastrophic dysplasia sulfate transporter (DTDST) gene mutations in HEK cells.</title>
        <authorList>
            <person name="Karniski L.P."/>
        </authorList>
    </citation>
    <scope>CHARACTERIZATION OF VARIANTS ACG1B VAL-340; ASP-425 DEL AND VAL-678</scope>
    <scope>CHARACTERIZATION OF VARIANTS EDM4 TRP-279; SER-653 AND VAL-715</scope>
    <scope>CHARACTERIZATION OF VARIANT DIATROPHIC DYSPLASIA PRO-454</scope>
    <scope>FUNCTION</scope>
    <scope>SUBCELLULAR LOCATION</scope>
    <scope>GLYCOSYLATION</scope>
</reference>
<reference key="14">
    <citation type="journal article" date="2010" name="Am. J. Physiol.">
        <title>Regulated transport of sulfate and oxalate by SLC26A2/DTDST.</title>
        <authorList>
            <person name="Heneghan J.F."/>
            <person name="Akhavein A."/>
            <person name="Salas M.J."/>
            <person name="Shmukler B.E."/>
            <person name="Karniski L.P."/>
            <person name="Vandorpe D.H."/>
            <person name="Alper S.L."/>
        </authorList>
    </citation>
    <scope>CHARACTERIZATION OF VARIANT EDM4 TRP-279</scope>
    <scope>FUNCTION</scope>
    <scope>TRANSPORTER ACTIVITY</scope>
    <scope>ACTIVITY REGULATION</scope>
</reference>
<reference key="15">
    <citation type="journal article" date="2012" name="Hum. Mutat.">
        <title>Pseudoachondroplasia and multiple epiphyseal dysplasia: A 7-year comprehensive analysis of the known disease genes identify novel and recurrent mutations and provides an accurate assessment of their relative contribution.</title>
        <authorList>
            <person name="Jackson G.C."/>
            <person name="Mittaz-Crettol L."/>
            <person name="Taylor J.A."/>
            <person name="Mortier G.R."/>
            <person name="Spranger J."/>
            <person name="Zabel B."/>
            <person name="Le Merrer M."/>
            <person name="Cormier-Daire V."/>
            <person name="Hall C.M."/>
            <person name="Offiah A."/>
            <person name="Wright M.J."/>
            <person name="Savarirayan R."/>
            <person name="Nishimura G."/>
            <person name="Ramsden S.C."/>
            <person name="Elles R."/>
            <person name="Bonafe L."/>
            <person name="Superti-Furga A."/>
            <person name="Unger S."/>
            <person name="Zankl A."/>
            <person name="Briggs M.D."/>
        </authorList>
    </citation>
    <scope>VARIANTS EDM4 SER-256; TRP-279; SER-653 AND VAL-715</scope>
</reference>
<accession>P50443</accession>
<accession>A8K2U3</accession>
<accession>B2R6J1</accession>
<accession>Q6N051</accession>
<comment type="function">
    <text evidence="2 7 10 12 14">Sulfate transporter which mediates sulfate uptake into chondrocytes in order to maintain adequate sulfation of proteoglycans which is needed for cartilage development (PubMed:11448940, PubMed:15294877, PubMed:20219950, PubMed:7923357). Mediates electroneutral anion exchange of sulfate ions for oxalate ions and of sulfate and oxalate ions for chloride ions (PubMed:20219950). Mediates exchange of sulfate and oxalate ions for hydroxyl ions and of chloride ions for bromide, iodide and nitrate ions (By similarity). The coupling of sulfate transport to both hydroxyl and chloride ions likely serves to ensure transport at both acidic pH when most sulfate uptake is mediated by sulfate-hydroxide exchange and alkaline pH when most sulfate uptake is mediated by sulfate-chloride exchange (By similarity). Essential for chondrocyte proliferation, differentiation and cell size expansion (By similarity).</text>
</comment>
<comment type="catalytic activity">
    <reaction evidence="12">
        <text>oxalate(in) + sulfate(out) = oxalate(out) + sulfate(in)</text>
        <dbReference type="Rhea" id="RHEA:72275"/>
        <dbReference type="ChEBI" id="CHEBI:16189"/>
        <dbReference type="ChEBI" id="CHEBI:30623"/>
    </reaction>
</comment>
<comment type="catalytic activity">
    <reaction evidence="12">
        <text>sulfate(out) + 2 chloride(in) = sulfate(in) + 2 chloride(out)</text>
        <dbReference type="Rhea" id="RHEA:75091"/>
        <dbReference type="ChEBI" id="CHEBI:16189"/>
        <dbReference type="ChEBI" id="CHEBI:17996"/>
    </reaction>
</comment>
<comment type="catalytic activity">
    <reaction evidence="12">
        <text>oxalate(out) + 2 chloride(in) = oxalate(in) + 2 chloride(out)</text>
        <dbReference type="Rhea" id="RHEA:75095"/>
        <dbReference type="ChEBI" id="CHEBI:17996"/>
        <dbReference type="ChEBI" id="CHEBI:30623"/>
    </reaction>
</comment>
<comment type="catalytic activity">
    <reaction evidence="2">
        <text>bromide(in) + chloride(out) = bromide(out) + chloride(in)</text>
        <dbReference type="Rhea" id="RHEA:75335"/>
        <dbReference type="ChEBI" id="CHEBI:15858"/>
        <dbReference type="ChEBI" id="CHEBI:17996"/>
    </reaction>
</comment>
<comment type="catalytic activity">
    <reaction evidence="2">
        <text>nitrate(in) + chloride(out) = nitrate(out) + chloride(in)</text>
        <dbReference type="Rhea" id="RHEA:75339"/>
        <dbReference type="ChEBI" id="CHEBI:17632"/>
        <dbReference type="ChEBI" id="CHEBI:17996"/>
    </reaction>
</comment>
<comment type="catalytic activity">
    <reaction evidence="2">
        <text>iodide(in) + chloride(out) = iodide(out) + chloride(in)</text>
        <dbReference type="Rhea" id="RHEA:72379"/>
        <dbReference type="ChEBI" id="CHEBI:16382"/>
        <dbReference type="ChEBI" id="CHEBI:17996"/>
    </reaction>
</comment>
<comment type="activity regulation">
    <text evidence="12">An extracellular acidic pH inhibits chloride-sulfate and chloride-oxalate exchange activity whereas an intracellular acidic pH activates chloride-sulfate exchange with no effect on chloride-oxalate exchange activity.</text>
</comment>
<comment type="subcellular location">
    <subcellularLocation>
        <location evidence="10 14">Cell membrane</location>
        <topology evidence="3">Multi-pass membrane protein</topology>
    </subcellularLocation>
    <subcellularLocation>
        <location evidence="1">Apical cell membrane</location>
        <topology evidence="3">Multi-pass membrane protein</topology>
    </subcellularLocation>
</comment>
<comment type="tissue specificity">
    <text evidence="14">Ubiquitously expressed.</text>
</comment>
<comment type="PTM">
    <text evidence="10">N-glycosylated.</text>
</comment>
<comment type="disease" evidence="6 7 10">
    <disease id="DI-00399">
        <name>Diastrophic dysplasia</name>
        <acronym>DTD</acronym>
        <description>An autosomal recessive disease characterized by osteochondrodysplasia with clinical features including dwarfism, spinal deformation, and specific joint abnormalities.</description>
        <dbReference type="MIM" id="222600"/>
    </disease>
    <text>The disease is caused by variants affecting the gene represented in this entry.</text>
</comment>
<comment type="disease" evidence="7 10 15">
    <disease id="DI-00019">
        <name>Achondrogenesis 1B</name>
        <acronym>ACG1B</acronym>
        <description>A form of achondrogenesis type 1, a lethal form of chondrodysplasia characterized by deficient ossification in the lumbar vertebrae and absent ossification in the sacral, pubic and ischial bones and clinically by stillbirth or early death. In addition to severe micromelia, there is a disproportionately large cranium due to marked edema of soft tissues. ACG1B is an autosomal recessive disease.</description>
        <dbReference type="MIM" id="600972"/>
    </disease>
    <text>The disease is caused by variants affecting the gene represented in this entry.</text>
</comment>
<comment type="disease" evidence="7 16">
    <disease id="DI-00143">
        <name>Atelosteogenesis 2</name>
        <acronym>AO2</acronym>
        <description>A perinatal dysplasia characterized by shortening of the limbs, a dysmorphic syndrome and radiographic skeletal features. Patients are stillborn or die soon after birth.</description>
        <dbReference type="MIM" id="256050"/>
    </disease>
    <text>The disease is caused by variants affecting the gene represented in this entry.</text>
</comment>
<comment type="disease" evidence="7 8 10 12 13">
    <disease id="DI-00788">
        <name>Multiple epiphyseal dysplasia 4</name>
        <acronym>EDM4</acronym>
        <description>A generalized skeletal dysplasia associated with significant morbidity. Joint pain, joint deformity, waddling gait, and short stature are the main clinical signs and symptoms. Radiological examination of the skeleton shows delayed, irregular mineralization of the epiphyseal ossification centers and of the centers of the carpal and tarsal bones. Multiple epiphyseal dysplasia is broadly categorized into the more severe Fairbank and the milder Ribbing types. The Fairbank type is characterized by shortness of stature, short and stubby fingers, small epiphyses in several joints, including the knee, ankle, hand, and hip. The Ribbing type is confined predominantly to the hip joints and is characterized by hands that are normal and stature that is normal or near-normal. Multiple epiphyseal dysplasia type 4 is a recessively inherited form, characterized by early childhood-onset hip dysplasia and recurrent patella dislocation. Short stature is not frequent.</description>
        <dbReference type="MIM" id="226900"/>
    </disease>
    <text>The disease is caused by variants affecting the gene represented in this entry.</text>
</comment>
<comment type="similarity">
    <text evidence="17">Belongs to the SLC26A/SulP transporter (TC 2.A.53) family.</text>
</comment>
<feature type="chain" id="PRO_0000080158" description="Sulfate transporter">
    <location>
        <begin position="1"/>
        <end position="739"/>
    </location>
</feature>
<feature type="transmembrane region" description="Helical" evidence="3">
    <location>
        <begin position="112"/>
        <end position="132"/>
    </location>
</feature>
<feature type="transmembrane region" description="Helical" evidence="3">
    <location>
        <begin position="137"/>
        <end position="157"/>
    </location>
</feature>
<feature type="transmembrane region" description="Helical" evidence="3">
    <location>
        <begin position="219"/>
        <end position="239"/>
    </location>
</feature>
<feature type="transmembrane region" description="Helical" evidence="3">
    <location>
        <begin position="242"/>
        <end position="262"/>
    </location>
</feature>
<feature type="transmembrane region" description="Helical" evidence="3">
    <location>
        <begin position="378"/>
        <end position="398"/>
    </location>
</feature>
<feature type="transmembrane region" description="Helical" evidence="3">
    <location>
        <begin position="420"/>
        <end position="440"/>
    </location>
</feature>
<feature type="transmembrane region" description="Helical" evidence="3">
    <location>
        <begin position="455"/>
        <end position="475"/>
    </location>
</feature>
<feature type="transmembrane region" description="Helical" evidence="3">
    <location>
        <begin position="524"/>
        <end position="544"/>
    </location>
</feature>
<feature type="domain" description="STAS" evidence="4">
    <location>
        <begin position="568"/>
        <end position="719"/>
    </location>
</feature>
<feature type="region of interest" description="Disordered" evidence="5">
    <location>
        <begin position="1"/>
        <end position="27"/>
    </location>
</feature>
<feature type="modified residue" description="Phosphoserine" evidence="18">
    <location>
        <position position="12"/>
    </location>
</feature>
<feature type="modified residue" description="Phosphoserine" evidence="18">
    <location>
        <position position="16"/>
    </location>
</feature>
<feature type="glycosylation site" description="N-linked (GlcNAc...) asparagine" evidence="3">
    <location>
        <position position="199"/>
    </location>
</feature>
<feature type="glycosylation site" description="N-linked (GlcNAc...) asparagine" evidence="3">
    <location>
        <position position="205"/>
    </location>
</feature>
<feature type="glycosylation site" description="N-linked (GlcNAc...) asparagine" evidence="3">
    <location>
        <position position="357"/>
    </location>
</feature>
<feature type="sequence variant" id="VAR_007434" description="In AO2; significant loss of sulfate transport; dbSNP:rs104893917." evidence="7 16">
    <original>G</original>
    <variation>E</variation>
    <location>
        <position position="255"/>
    </location>
</feature>
<feature type="sequence variant" id="VAR_066835" description="In EDM4; dbSNP:rs1419613966." evidence="13">
    <original>F</original>
    <variation>S</variation>
    <location>
        <position position="256"/>
    </location>
</feature>
<feature type="sequence variant" id="VAR_007435" description="In AO2 and EDM4; reduced sulfate transport; significant reduction in sulfate-oxalate exchange activity; no effect on cell membrane localization; dbSNP:rs104893915." evidence="7 10 12 13 16">
    <original>R</original>
    <variation>W</variation>
    <location>
        <position position="279"/>
    </location>
</feature>
<feature type="sequence variant" id="VAR_007436" description="In ACG1B; reduced sulfate transport; loss of cell membrane localization." evidence="7 10 15">
    <location>
        <position position="340"/>
    </location>
</feature>
<feature type="sequence variant" id="VAR_007437" description="In ACG1B; significant loss of sulfate transport; dbSNP:rs104893920." evidence="7 10 15">
    <original>N</original>
    <variation>D</variation>
    <location>
        <position position="425"/>
    </location>
</feature>
<feature type="sequence variant" id="VAR_018654" description="In diatrophic dysplasia; broad bone-platyspondylic variant; no effect on sulfate transport and cell membrane localization; dbSNP:rs104893921." evidence="6 7 10">
    <original>Q</original>
    <variation>P</variation>
    <location>
        <position position="454"/>
    </location>
</feature>
<feature type="sequence variant" id="VAR_058415" description="In dbSNP:rs30832." evidence="9 11 14">
    <original>I</original>
    <variation>T</variation>
    <location>
        <position position="574"/>
    </location>
</feature>
<feature type="sequence variant" id="VAR_018655" description="In EDM4; no effect on sulfate transport and cell membrane localization; dbSNP:rs104893924." evidence="7 8 10 13">
    <original>C</original>
    <variation>S</variation>
    <location>
        <position position="653"/>
    </location>
</feature>
<feature type="sequence variant" id="VAR_007438" description="In ACG1B; reduced sulfate transport; loss of cell membrane localization; dbSNP:rs104893916." evidence="7 10 15">
    <original>G</original>
    <variation>V</variation>
    <location>
        <position position="678"/>
    </location>
</feature>
<feature type="sequence variant" id="VAR_020402" description="In dbSNP:rs3776070.">
    <original>T</original>
    <variation>S</variation>
    <location>
        <position position="689"/>
    </location>
</feature>
<feature type="sequence variant" id="VAR_007439" description="In AO2 and EDM4; no effect on sulfate transport and cell membrane localization; dbSNP:rs104893918." evidence="7 10 13 16">
    <original>A</original>
    <variation>V</variation>
    <location>
        <position position="715"/>
    </location>
</feature>
<feature type="sequence conflict" description="In Ref. 6; CAE45819." evidence="17" ref="6">
    <original>R</original>
    <variation>G</variation>
    <location>
        <position position="619"/>
    </location>
</feature>
<feature type="sequence conflict" description="In Ref. 2; BAG35488." evidence="17" ref="2">
    <original>K</original>
    <variation>R</variation>
    <location>
        <position position="622"/>
    </location>
</feature>
<protein>
    <recommendedName>
        <fullName>Sulfate transporter</fullName>
    </recommendedName>
    <alternativeName>
        <fullName>Diastrophic dysplasia protein</fullName>
    </alternativeName>
    <alternativeName>
        <fullName>Solute carrier family 26 member 2</fullName>
    </alternativeName>
</protein>
<proteinExistence type="evidence at protein level"/>
<name>S26A2_HUMAN</name>
<organism>
    <name type="scientific">Homo sapiens</name>
    <name type="common">Human</name>
    <dbReference type="NCBI Taxonomy" id="9606"/>
    <lineage>
        <taxon>Eukaryota</taxon>
        <taxon>Metazoa</taxon>
        <taxon>Chordata</taxon>
        <taxon>Craniata</taxon>
        <taxon>Vertebrata</taxon>
        <taxon>Euteleostomi</taxon>
        <taxon>Mammalia</taxon>
        <taxon>Eutheria</taxon>
        <taxon>Euarchontoglires</taxon>
        <taxon>Primates</taxon>
        <taxon>Haplorrhini</taxon>
        <taxon>Catarrhini</taxon>
        <taxon>Hominidae</taxon>
        <taxon>Homo</taxon>
    </lineage>
</organism>
<evidence type="ECO:0000250" key="1">
    <source>
        <dbReference type="UniProtKB" id="O70531"/>
    </source>
</evidence>
<evidence type="ECO:0000250" key="2">
    <source>
        <dbReference type="UniProtKB" id="Q62273"/>
    </source>
</evidence>
<evidence type="ECO:0000255" key="3"/>
<evidence type="ECO:0000255" key="4">
    <source>
        <dbReference type="PROSITE-ProRule" id="PRU00198"/>
    </source>
</evidence>
<evidence type="ECO:0000256" key="5">
    <source>
        <dbReference type="SAM" id="MobiDB-lite"/>
    </source>
</evidence>
<evidence type="ECO:0000269" key="6">
    <source>
    </source>
</evidence>
<evidence type="ECO:0000269" key="7">
    <source>
    </source>
</evidence>
<evidence type="ECO:0000269" key="8">
    <source>
    </source>
</evidence>
<evidence type="ECO:0000269" key="9">
    <source>
    </source>
</evidence>
<evidence type="ECO:0000269" key="10">
    <source>
    </source>
</evidence>
<evidence type="ECO:0000269" key="11">
    <source>
    </source>
</evidence>
<evidence type="ECO:0000269" key="12">
    <source>
    </source>
</evidence>
<evidence type="ECO:0000269" key="13">
    <source>
    </source>
</evidence>
<evidence type="ECO:0000269" key="14">
    <source>
    </source>
</evidence>
<evidence type="ECO:0000269" key="15">
    <source>
    </source>
</evidence>
<evidence type="ECO:0000269" key="16">
    <source>
    </source>
</evidence>
<evidence type="ECO:0000305" key="17"/>
<evidence type="ECO:0007744" key="18">
    <source>
    </source>
</evidence>
<dbReference type="EMBL" id="U14528">
    <property type="protein sequence ID" value="AAA70081.1"/>
    <property type="molecule type" value="mRNA"/>
</dbReference>
<dbReference type="EMBL" id="AK290358">
    <property type="protein sequence ID" value="BAF83047.1"/>
    <property type="molecule type" value="mRNA"/>
</dbReference>
<dbReference type="EMBL" id="AK312596">
    <property type="protein sequence ID" value="BAG35488.1"/>
    <property type="molecule type" value="mRNA"/>
</dbReference>
<dbReference type="EMBL" id="AC008427">
    <property type="status" value="NOT_ANNOTATED_CDS"/>
    <property type="molecule type" value="Genomic_DNA"/>
</dbReference>
<dbReference type="EMBL" id="CH471062">
    <property type="protein sequence ID" value="EAW61755.1"/>
    <property type="molecule type" value="Genomic_DNA"/>
</dbReference>
<dbReference type="EMBL" id="BC059390">
    <property type="protein sequence ID" value="AAH59390.1"/>
    <property type="molecule type" value="mRNA"/>
</dbReference>
<dbReference type="EMBL" id="BX640696">
    <property type="protein sequence ID" value="CAE45819.1"/>
    <property type="molecule type" value="mRNA"/>
</dbReference>
<dbReference type="CCDS" id="CCDS4300.1"/>
<dbReference type="PIR" id="A54808">
    <property type="entry name" value="A54808"/>
</dbReference>
<dbReference type="RefSeq" id="NP_000103.2">
    <property type="nucleotide sequence ID" value="NM_000112.4"/>
</dbReference>
<dbReference type="RefSeq" id="XP_016864680.1">
    <property type="nucleotide sequence ID" value="XM_017009191.3"/>
</dbReference>
<dbReference type="PDB" id="7XLM">
    <property type="method" value="EM"/>
    <property type="resolution" value="3.73 A"/>
    <property type="chains" value="A/B=1-739"/>
</dbReference>
<dbReference type="PDB" id="8TNW">
    <property type="method" value="EM"/>
    <property type="resolution" value="3.17 A"/>
    <property type="chains" value="A/B=52-724"/>
</dbReference>
<dbReference type="PDB" id="8TNX">
    <property type="method" value="EM"/>
    <property type="resolution" value="3.03 A"/>
    <property type="chains" value="A/B=52-724"/>
</dbReference>
<dbReference type="PDB" id="8TNY">
    <property type="method" value="EM"/>
    <property type="resolution" value="3.55 A"/>
    <property type="chains" value="A/B=52-724"/>
</dbReference>
<dbReference type="PDBsum" id="7XLM"/>
<dbReference type="PDBsum" id="8TNW"/>
<dbReference type="PDBsum" id="8TNX"/>
<dbReference type="PDBsum" id="8TNY"/>
<dbReference type="EMDB" id="EMD-33284"/>
<dbReference type="EMDB" id="EMD-41427"/>
<dbReference type="EMDB" id="EMD-41428"/>
<dbReference type="EMDB" id="EMD-41429"/>
<dbReference type="SMR" id="P50443"/>
<dbReference type="BioGRID" id="108169">
    <property type="interactions" value="62"/>
</dbReference>
<dbReference type="FunCoup" id="P50443">
    <property type="interactions" value="545"/>
</dbReference>
<dbReference type="IntAct" id="P50443">
    <property type="interactions" value="37"/>
</dbReference>
<dbReference type="STRING" id="9606.ENSP00000286298"/>
<dbReference type="TCDB" id="2.A.53.2.1">
    <property type="family name" value="the sulfate permease (sulp) family"/>
</dbReference>
<dbReference type="GlyCosmos" id="P50443">
    <property type="glycosylation" value="3 sites, No reported glycans"/>
</dbReference>
<dbReference type="GlyGen" id="P50443">
    <property type="glycosylation" value="3 sites, 3 N-linked glycans (3 sites)"/>
</dbReference>
<dbReference type="iPTMnet" id="P50443"/>
<dbReference type="PhosphoSitePlus" id="P50443"/>
<dbReference type="SwissPalm" id="P50443"/>
<dbReference type="BioMuta" id="SLC26A2"/>
<dbReference type="DMDM" id="254763328"/>
<dbReference type="jPOST" id="P50443"/>
<dbReference type="MassIVE" id="P50443"/>
<dbReference type="PaxDb" id="9606-ENSP00000286298"/>
<dbReference type="PeptideAtlas" id="P50443"/>
<dbReference type="ProteomicsDB" id="56225"/>
<dbReference type="Pumba" id="P50443"/>
<dbReference type="Antibodypedia" id="27892">
    <property type="antibodies" value="142 antibodies from 24 providers"/>
</dbReference>
<dbReference type="DNASU" id="1836"/>
<dbReference type="Ensembl" id="ENST00000286298.5">
    <property type="protein sequence ID" value="ENSP00000286298.4"/>
    <property type="gene ID" value="ENSG00000155850.9"/>
</dbReference>
<dbReference type="GeneID" id="1836"/>
<dbReference type="KEGG" id="hsa:1836"/>
<dbReference type="MANE-Select" id="ENST00000286298.5">
    <property type="protein sequence ID" value="ENSP00000286298.4"/>
    <property type="RefSeq nucleotide sequence ID" value="NM_000112.4"/>
    <property type="RefSeq protein sequence ID" value="NP_000103.2"/>
</dbReference>
<dbReference type="UCSC" id="uc003lrh.4">
    <property type="organism name" value="human"/>
</dbReference>
<dbReference type="AGR" id="HGNC:10994"/>
<dbReference type="CTD" id="1836"/>
<dbReference type="DisGeNET" id="1836"/>
<dbReference type="GeneCards" id="SLC26A2"/>
<dbReference type="GeneReviews" id="SLC26A2"/>
<dbReference type="HGNC" id="HGNC:10994">
    <property type="gene designation" value="SLC26A2"/>
</dbReference>
<dbReference type="HPA" id="ENSG00000155850">
    <property type="expression patterns" value="Tissue enriched (intestine)"/>
</dbReference>
<dbReference type="MalaCards" id="SLC26A2"/>
<dbReference type="MIM" id="222600">
    <property type="type" value="phenotype"/>
</dbReference>
<dbReference type="MIM" id="226900">
    <property type="type" value="phenotype"/>
</dbReference>
<dbReference type="MIM" id="256050">
    <property type="type" value="phenotype"/>
</dbReference>
<dbReference type="MIM" id="600972">
    <property type="type" value="phenotype"/>
</dbReference>
<dbReference type="MIM" id="606718">
    <property type="type" value="gene"/>
</dbReference>
<dbReference type="neXtProt" id="NX_P50443"/>
<dbReference type="OpenTargets" id="ENSG00000155850"/>
<dbReference type="Orphanet" id="93298">
    <property type="disease" value="Achondrogenesis type 1B"/>
</dbReference>
<dbReference type="Orphanet" id="56304">
    <property type="disease" value="Atelosteogenesis type II"/>
</dbReference>
<dbReference type="Orphanet" id="628">
    <property type="disease" value="Diastrophic dysplasia"/>
</dbReference>
<dbReference type="Orphanet" id="93307">
    <property type="disease" value="Multiple epiphyseal dysplasia type 4"/>
</dbReference>
<dbReference type="PharmGKB" id="PA149"/>
<dbReference type="VEuPathDB" id="HostDB:ENSG00000155850"/>
<dbReference type="eggNOG" id="KOG0236">
    <property type="taxonomic scope" value="Eukaryota"/>
</dbReference>
<dbReference type="GeneTree" id="ENSGT01120000271864"/>
<dbReference type="HOGENOM" id="CLU_003182_9_4_1"/>
<dbReference type="InParanoid" id="P50443"/>
<dbReference type="OMA" id="PALYWIP"/>
<dbReference type="OrthoDB" id="288203at2759"/>
<dbReference type="PAN-GO" id="P50443">
    <property type="GO annotations" value="6 GO annotations based on evolutionary models"/>
</dbReference>
<dbReference type="PhylomeDB" id="P50443"/>
<dbReference type="TreeFam" id="TF313784"/>
<dbReference type="PathwayCommons" id="P50443"/>
<dbReference type="Reactome" id="R-HSA-174362">
    <property type="pathway name" value="Transport and synthesis of PAPS"/>
</dbReference>
<dbReference type="Reactome" id="R-HSA-3560792">
    <property type="pathway name" value="Defective SLC26A2 causes chondrodysplasias"/>
</dbReference>
<dbReference type="Reactome" id="R-HSA-427601">
    <property type="pathway name" value="Multifunctional anion exchangers"/>
</dbReference>
<dbReference type="SignaLink" id="P50443"/>
<dbReference type="BioGRID-ORCS" id="1836">
    <property type="hits" value="9 hits in 1162 CRISPR screens"/>
</dbReference>
<dbReference type="ChiTaRS" id="SLC26A2">
    <property type="organism name" value="human"/>
</dbReference>
<dbReference type="GeneWiki" id="SLC26A2"/>
<dbReference type="GenomeRNAi" id="1836"/>
<dbReference type="Pharos" id="P50443">
    <property type="development level" value="Tbio"/>
</dbReference>
<dbReference type="PRO" id="PR:P50443"/>
<dbReference type="Proteomes" id="UP000005640">
    <property type="component" value="Chromosome 5"/>
</dbReference>
<dbReference type="RNAct" id="P50443">
    <property type="molecule type" value="protein"/>
</dbReference>
<dbReference type="Bgee" id="ENSG00000155850">
    <property type="expression patterns" value="Expressed in colonic mucosa and 202 other cell types or tissues"/>
</dbReference>
<dbReference type="ExpressionAtlas" id="P50443">
    <property type="expression patterns" value="baseline and differential"/>
</dbReference>
<dbReference type="GO" id="GO:0016324">
    <property type="term" value="C:apical plasma membrane"/>
    <property type="evidence" value="ECO:0007669"/>
    <property type="project" value="UniProtKB-SubCell"/>
</dbReference>
<dbReference type="GO" id="GO:0070062">
    <property type="term" value="C:extracellular exosome"/>
    <property type="evidence" value="ECO:0007005"/>
    <property type="project" value="UniProtKB"/>
</dbReference>
<dbReference type="GO" id="GO:0016020">
    <property type="term" value="C:membrane"/>
    <property type="evidence" value="ECO:0000304"/>
    <property type="project" value="ProtInc"/>
</dbReference>
<dbReference type="GO" id="GO:0031528">
    <property type="term" value="C:microvillus membrane"/>
    <property type="evidence" value="ECO:0007669"/>
    <property type="project" value="Ensembl"/>
</dbReference>
<dbReference type="GO" id="GO:0005886">
    <property type="term" value="C:plasma membrane"/>
    <property type="evidence" value="ECO:0000315"/>
    <property type="project" value="UniProtKB"/>
</dbReference>
<dbReference type="GO" id="GO:0015106">
    <property type="term" value="F:bicarbonate transmembrane transporter activity"/>
    <property type="evidence" value="ECO:0000318"/>
    <property type="project" value="GO_Central"/>
</dbReference>
<dbReference type="GO" id="GO:0015108">
    <property type="term" value="F:chloride transmembrane transporter activity"/>
    <property type="evidence" value="ECO:0000318"/>
    <property type="project" value="GO_Central"/>
</dbReference>
<dbReference type="GO" id="GO:0019531">
    <property type="term" value="F:oxalate transmembrane transporter activity"/>
    <property type="evidence" value="ECO:0000318"/>
    <property type="project" value="GO_Central"/>
</dbReference>
<dbReference type="GO" id="GO:0008271">
    <property type="term" value="F:secondary active sulfate transmembrane transporter activity"/>
    <property type="evidence" value="ECO:0007669"/>
    <property type="project" value="InterPro"/>
</dbReference>
<dbReference type="GO" id="GO:0005452">
    <property type="term" value="F:solute:inorganic anion antiporter activity"/>
    <property type="evidence" value="ECO:0000314"/>
    <property type="project" value="UniProtKB"/>
</dbReference>
<dbReference type="GO" id="GO:0015116">
    <property type="term" value="F:sulfate transmembrane transporter activity"/>
    <property type="evidence" value="ECO:0000315"/>
    <property type="project" value="UniProtKB"/>
</dbReference>
<dbReference type="GO" id="GO:1902476">
    <property type="term" value="P:chloride transmembrane transport"/>
    <property type="evidence" value="ECO:0000318"/>
    <property type="project" value="GO_Central"/>
</dbReference>
<dbReference type="GO" id="GO:0002062">
    <property type="term" value="P:chondrocyte differentiation"/>
    <property type="evidence" value="ECO:0000250"/>
    <property type="project" value="UniProtKB"/>
</dbReference>
<dbReference type="GO" id="GO:0035988">
    <property type="term" value="P:chondrocyte proliferation"/>
    <property type="evidence" value="ECO:0000250"/>
    <property type="project" value="UniProtKB"/>
</dbReference>
<dbReference type="GO" id="GO:1902358">
    <property type="term" value="P:sulfate transmembrane transport"/>
    <property type="evidence" value="ECO:0000315"/>
    <property type="project" value="UniProtKB"/>
</dbReference>
<dbReference type="CDD" id="cd06844">
    <property type="entry name" value="STAS"/>
    <property type="match status" value="1"/>
</dbReference>
<dbReference type="FunFam" id="3.30.750.24:FF:000015">
    <property type="entry name" value="Sulfate transporter"/>
    <property type="match status" value="1"/>
</dbReference>
<dbReference type="Gene3D" id="3.30.750.24">
    <property type="entry name" value="STAS domain"/>
    <property type="match status" value="1"/>
</dbReference>
<dbReference type="InterPro" id="IPR018045">
    <property type="entry name" value="S04_transporter_CS"/>
</dbReference>
<dbReference type="InterPro" id="IPR011547">
    <property type="entry name" value="SLC26A/SulP_dom"/>
</dbReference>
<dbReference type="InterPro" id="IPR001902">
    <property type="entry name" value="SLC26A/SulP_fam"/>
</dbReference>
<dbReference type="InterPro" id="IPR002645">
    <property type="entry name" value="STAS_dom"/>
</dbReference>
<dbReference type="InterPro" id="IPR036513">
    <property type="entry name" value="STAS_dom_sf"/>
</dbReference>
<dbReference type="NCBIfam" id="TIGR00815">
    <property type="entry name" value="sulP"/>
    <property type="match status" value="1"/>
</dbReference>
<dbReference type="PANTHER" id="PTHR11814">
    <property type="entry name" value="SULFATE TRANSPORTER"/>
    <property type="match status" value="1"/>
</dbReference>
<dbReference type="Pfam" id="PF01740">
    <property type="entry name" value="STAS"/>
    <property type="match status" value="1"/>
</dbReference>
<dbReference type="Pfam" id="PF00916">
    <property type="entry name" value="Sulfate_transp"/>
    <property type="match status" value="1"/>
</dbReference>
<dbReference type="SUPFAM" id="SSF52091">
    <property type="entry name" value="SpoIIaa-like"/>
    <property type="match status" value="1"/>
</dbReference>
<dbReference type="PROSITE" id="PS01130">
    <property type="entry name" value="SLC26A"/>
    <property type="match status" value="1"/>
</dbReference>
<dbReference type="PROSITE" id="PS50801">
    <property type="entry name" value="STAS"/>
    <property type="match status" value="1"/>
</dbReference>
<keyword id="KW-0002">3D-structure</keyword>
<keyword id="KW-1003">Cell membrane</keyword>
<keyword id="KW-0225">Disease variant</keyword>
<keyword id="KW-0242">Dwarfism</keyword>
<keyword id="KW-0325">Glycoprotein</keyword>
<keyword id="KW-0472">Membrane</keyword>
<keyword id="KW-0597">Phosphoprotein</keyword>
<keyword id="KW-1267">Proteomics identification</keyword>
<keyword id="KW-1185">Reference proteome</keyword>
<keyword id="KW-0812">Transmembrane</keyword>
<keyword id="KW-1133">Transmembrane helix</keyword>
<keyword id="KW-0813">Transport</keyword>
<sequence>MSSESKEQHNVSPRDSAEGNDSYPSGIHLELQRESSTDFKQFETNDQCRPYHRILIERQEKSDTNFKEFVIKKLQKNCQCSPAKAKNMILGFLPVLQWLPKYDLKKNILGDVMSGLIVGILLVPQSIAYSLLAGQEPVYGLYTSFFASIIYFLLGTSRHISVGIFGVLCLMIGETVDRELQKAGYDNAHSAPSLGMVSNGSTLLNHTSDRICDKSCYAIMVGSTVTFIAGVYQVAMGFFQVGFVSVYLSDALLSGFVTGASFTILTSQAKYLLGLNLPRTNGVGSLITTWIHVFRNIHKTNLCDLITSLLCLLVLLPTKELNEHFKSKLKAPIPIELVVVVAATLASHFGKLHENYNSSIAGHIPTGFMPPKVPEWNLIPSVAVDAIAISIIGFAITVSLSEMFAKKHGYTVKANQEMYAIGFCNIIPSFFHCFTTSAALAKTLVKESTGCHTQLSGVVTALVLLLVLLVIAPLFYSLQKSVLGVITIVNLRGALRKFRDLPKMWSISRMDTVIWFVTMLSSALLSTEIGLLVGVCFSIFCVILRTQKPKSSLLGLVEESEVFESVSAYKNLQIKPGIKIFRFVAPLYYINKECFKSALYKQTVNPILIKVAWKKAAKRKIKEKVVTLGGIQDEMSVQLSHDPLELHTIVIDCSAIQFLDTAGIHTLKEVRRDYEAIGIQVLLAQCNPTVRDSLTNGEYCKKEEENLLFYSVYEAMAFAEVSKNQKGVCVPNGLSLSSD</sequence>